<accession>Q896H4</accession>
<comment type="similarity">
    <text evidence="1">Belongs to the DNA glycosylase MPG family.</text>
</comment>
<organism>
    <name type="scientific">Clostridium tetani (strain Massachusetts / E88)</name>
    <dbReference type="NCBI Taxonomy" id="212717"/>
    <lineage>
        <taxon>Bacteria</taxon>
        <taxon>Bacillati</taxon>
        <taxon>Bacillota</taxon>
        <taxon>Clostridia</taxon>
        <taxon>Eubacteriales</taxon>
        <taxon>Clostridiaceae</taxon>
        <taxon>Clostridium</taxon>
    </lineage>
</organism>
<proteinExistence type="inferred from homology"/>
<gene>
    <name type="ordered locus">CTC_01030</name>
</gene>
<sequence length="203" mass="23246">MKIQRKFYEKSALQVAKYLLGKILVNEVEGITLKGKIVETEAYIGAIDKASHAYGGKKTERVMPLYGKPGTAYVYLIYGMYHCFNVITKVEGEAEGVLIRAIEPLEGIEKMAYLRYKKPISEISKTQFKNLTTGPGKLCIALNIDKSNNKQDLCNEGTLYIEHNDKEKFNIVESKRIGIEYAEEAKDFLWRFYIEDNPWISKK</sequence>
<evidence type="ECO:0000255" key="1">
    <source>
        <dbReference type="HAMAP-Rule" id="MF_00527"/>
    </source>
</evidence>
<dbReference type="EC" id="3.2.2.-" evidence="1"/>
<dbReference type="EMBL" id="AE015927">
    <property type="protein sequence ID" value="AAO35616.1"/>
    <property type="molecule type" value="Genomic_DNA"/>
</dbReference>
<dbReference type="RefSeq" id="WP_011099278.1">
    <property type="nucleotide sequence ID" value="NC_004557.1"/>
</dbReference>
<dbReference type="SMR" id="Q896H4"/>
<dbReference type="STRING" id="212717.CTC_01030"/>
<dbReference type="GeneID" id="24255013"/>
<dbReference type="KEGG" id="ctc:CTC_01030"/>
<dbReference type="HOGENOM" id="CLU_060471_0_2_9"/>
<dbReference type="OrthoDB" id="9794313at2"/>
<dbReference type="Proteomes" id="UP000001412">
    <property type="component" value="Chromosome"/>
</dbReference>
<dbReference type="GO" id="GO:0003905">
    <property type="term" value="F:alkylbase DNA N-glycosylase activity"/>
    <property type="evidence" value="ECO:0007669"/>
    <property type="project" value="InterPro"/>
</dbReference>
<dbReference type="GO" id="GO:0003677">
    <property type="term" value="F:DNA binding"/>
    <property type="evidence" value="ECO:0007669"/>
    <property type="project" value="InterPro"/>
</dbReference>
<dbReference type="GO" id="GO:0006284">
    <property type="term" value="P:base-excision repair"/>
    <property type="evidence" value="ECO:0007669"/>
    <property type="project" value="InterPro"/>
</dbReference>
<dbReference type="CDD" id="cd00540">
    <property type="entry name" value="AAG"/>
    <property type="match status" value="1"/>
</dbReference>
<dbReference type="FunFam" id="3.10.300.10:FF:000001">
    <property type="entry name" value="Putative 3-methyladenine DNA glycosylase"/>
    <property type="match status" value="1"/>
</dbReference>
<dbReference type="Gene3D" id="3.10.300.10">
    <property type="entry name" value="Methylpurine-DNA glycosylase (MPG)"/>
    <property type="match status" value="1"/>
</dbReference>
<dbReference type="HAMAP" id="MF_00527">
    <property type="entry name" value="3MGH"/>
    <property type="match status" value="1"/>
</dbReference>
<dbReference type="InterPro" id="IPR011034">
    <property type="entry name" value="Formyl_transferase-like_C_sf"/>
</dbReference>
<dbReference type="InterPro" id="IPR003180">
    <property type="entry name" value="MPG"/>
</dbReference>
<dbReference type="InterPro" id="IPR036995">
    <property type="entry name" value="MPG_sf"/>
</dbReference>
<dbReference type="NCBIfam" id="TIGR00567">
    <property type="entry name" value="3mg"/>
    <property type="match status" value="1"/>
</dbReference>
<dbReference type="NCBIfam" id="NF002001">
    <property type="entry name" value="PRK00802.1-1"/>
    <property type="match status" value="1"/>
</dbReference>
<dbReference type="PANTHER" id="PTHR10429">
    <property type="entry name" value="DNA-3-METHYLADENINE GLYCOSYLASE"/>
    <property type="match status" value="1"/>
</dbReference>
<dbReference type="PANTHER" id="PTHR10429:SF0">
    <property type="entry name" value="DNA-3-METHYLADENINE GLYCOSYLASE"/>
    <property type="match status" value="1"/>
</dbReference>
<dbReference type="Pfam" id="PF02245">
    <property type="entry name" value="Pur_DNA_glyco"/>
    <property type="match status" value="1"/>
</dbReference>
<dbReference type="SUPFAM" id="SSF50486">
    <property type="entry name" value="FMT C-terminal domain-like"/>
    <property type="match status" value="1"/>
</dbReference>
<keyword id="KW-0227">DNA damage</keyword>
<keyword id="KW-0234">DNA repair</keyword>
<keyword id="KW-0378">Hydrolase</keyword>
<keyword id="KW-1185">Reference proteome</keyword>
<feature type="chain" id="PRO_0000100081" description="Putative 3-methyladenine DNA glycosylase">
    <location>
        <begin position="1"/>
        <end position="203"/>
    </location>
</feature>
<protein>
    <recommendedName>
        <fullName evidence="1">Putative 3-methyladenine DNA glycosylase</fullName>
        <ecNumber evidence="1">3.2.2.-</ecNumber>
    </recommendedName>
</protein>
<name>3MGH_CLOTE</name>
<reference key="1">
    <citation type="journal article" date="2003" name="Proc. Natl. Acad. Sci. U.S.A.">
        <title>The genome sequence of Clostridium tetani, the causative agent of tetanus disease.</title>
        <authorList>
            <person name="Brueggemann H."/>
            <person name="Baeumer S."/>
            <person name="Fricke W.F."/>
            <person name="Wiezer A."/>
            <person name="Liesegang H."/>
            <person name="Decker I."/>
            <person name="Herzberg C."/>
            <person name="Martinez-Arias R."/>
            <person name="Merkl R."/>
            <person name="Henne A."/>
            <person name="Gottschalk G."/>
        </authorList>
    </citation>
    <scope>NUCLEOTIDE SEQUENCE [LARGE SCALE GENOMIC DNA]</scope>
    <source>
        <strain>Massachusetts / E88</strain>
    </source>
</reference>